<name>RHMD_ECOL5</name>
<evidence type="ECO:0000255" key="1">
    <source>
        <dbReference type="HAMAP-Rule" id="MF_01288"/>
    </source>
</evidence>
<comment type="function">
    <text evidence="1">Catalyzes the dehydration of L-rhamnonate to 2-keto-3-deoxy-L-rhamnonate (KDR).</text>
</comment>
<comment type="catalytic activity">
    <reaction evidence="1">
        <text>L-rhamnonate = 2-dehydro-3-deoxy-L-rhamnonate + H2O</text>
        <dbReference type="Rhea" id="RHEA:23080"/>
        <dbReference type="ChEBI" id="CHEBI:15377"/>
        <dbReference type="ChEBI" id="CHEBI:58118"/>
        <dbReference type="ChEBI" id="CHEBI:58371"/>
        <dbReference type="EC" id="4.2.1.90"/>
    </reaction>
</comment>
<comment type="cofactor">
    <cofactor evidence="1">
        <name>Mg(2+)</name>
        <dbReference type="ChEBI" id="CHEBI:18420"/>
    </cofactor>
    <text evidence="1">Binds 1 Mg(2+) ion per subunit.</text>
</comment>
<comment type="subunit">
    <text evidence="1">Homooctamer; tetramer of dimers.</text>
</comment>
<comment type="miscellaneous">
    <text evidence="1">Reaction proceeds via a syn dehydration.</text>
</comment>
<comment type="similarity">
    <text evidence="1">Belongs to the mandelate racemase/muconate lactonizing enzyme family. RhamD subfamily.</text>
</comment>
<dbReference type="EC" id="4.2.1.90" evidence="1"/>
<dbReference type="EMBL" id="CP000247">
    <property type="protein sequence ID" value="ABG70284.1"/>
    <property type="molecule type" value="Genomic_DNA"/>
</dbReference>
<dbReference type="SMR" id="Q0TFJ5"/>
<dbReference type="KEGG" id="ecp:ECP_2290"/>
<dbReference type="HOGENOM" id="CLU_030273_1_0_6"/>
<dbReference type="Proteomes" id="UP000009182">
    <property type="component" value="Chromosome"/>
</dbReference>
<dbReference type="GO" id="GO:0050032">
    <property type="term" value="F:L-rhamnonate dehydratase activity"/>
    <property type="evidence" value="ECO:0007669"/>
    <property type="project" value="UniProtKB-UniRule"/>
</dbReference>
<dbReference type="GO" id="GO:0000287">
    <property type="term" value="F:magnesium ion binding"/>
    <property type="evidence" value="ECO:0007669"/>
    <property type="project" value="UniProtKB-UniRule"/>
</dbReference>
<dbReference type="GO" id="GO:0009063">
    <property type="term" value="P:amino acid catabolic process"/>
    <property type="evidence" value="ECO:0007669"/>
    <property type="project" value="InterPro"/>
</dbReference>
<dbReference type="GO" id="GO:0016052">
    <property type="term" value="P:carbohydrate catabolic process"/>
    <property type="evidence" value="ECO:0007669"/>
    <property type="project" value="TreeGrafter"/>
</dbReference>
<dbReference type="CDD" id="cd03327">
    <property type="entry name" value="MR_like_2"/>
    <property type="match status" value="1"/>
</dbReference>
<dbReference type="FunFam" id="3.30.390.10:FF:000007">
    <property type="entry name" value="L-rhamnonate dehydratase"/>
    <property type="match status" value="1"/>
</dbReference>
<dbReference type="FunFam" id="3.20.20.120:FF:000005">
    <property type="entry name" value="Putative L-rhamnonate dehydratase"/>
    <property type="match status" value="1"/>
</dbReference>
<dbReference type="Gene3D" id="3.20.20.120">
    <property type="entry name" value="Enolase-like C-terminal domain"/>
    <property type="match status" value="1"/>
</dbReference>
<dbReference type="Gene3D" id="3.30.390.10">
    <property type="entry name" value="Enolase-like, N-terminal domain"/>
    <property type="match status" value="1"/>
</dbReference>
<dbReference type="HAMAP" id="MF_01288">
    <property type="entry name" value="Rhamnon_dehydrat"/>
    <property type="match status" value="1"/>
</dbReference>
<dbReference type="InterPro" id="IPR036849">
    <property type="entry name" value="Enolase-like_C_sf"/>
</dbReference>
<dbReference type="InterPro" id="IPR029017">
    <property type="entry name" value="Enolase-like_N"/>
</dbReference>
<dbReference type="InterPro" id="IPR029065">
    <property type="entry name" value="Enolase_C-like"/>
</dbReference>
<dbReference type="InterPro" id="IPR023444">
    <property type="entry name" value="L-Rhamnon_dehydrat"/>
</dbReference>
<dbReference type="InterPro" id="IPR018110">
    <property type="entry name" value="Mandel_Rmase/mucon_lact_enz_CS"/>
</dbReference>
<dbReference type="InterPro" id="IPR013342">
    <property type="entry name" value="Mandelate_racemase_C"/>
</dbReference>
<dbReference type="InterPro" id="IPR013341">
    <property type="entry name" value="Mandelate_racemase_N_dom"/>
</dbReference>
<dbReference type="InterPro" id="IPR046945">
    <property type="entry name" value="RHMD-like"/>
</dbReference>
<dbReference type="NCBIfam" id="NF011968">
    <property type="entry name" value="PRK15440.1"/>
    <property type="match status" value="1"/>
</dbReference>
<dbReference type="PANTHER" id="PTHR13794">
    <property type="entry name" value="ENOLASE SUPERFAMILY, MANDELATE RACEMASE"/>
    <property type="match status" value="1"/>
</dbReference>
<dbReference type="PANTHER" id="PTHR13794:SF58">
    <property type="entry name" value="MITOCHONDRIAL ENOLASE SUPERFAMILY MEMBER 1"/>
    <property type="match status" value="1"/>
</dbReference>
<dbReference type="Pfam" id="PF13378">
    <property type="entry name" value="MR_MLE_C"/>
    <property type="match status" value="1"/>
</dbReference>
<dbReference type="Pfam" id="PF02746">
    <property type="entry name" value="MR_MLE_N"/>
    <property type="match status" value="1"/>
</dbReference>
<dbReference type="SFLD" id="SFLDG00179">
    <property type="entry name" value="mandelate_racemase"/>
    <property type="match status" value="1"/>
</dbReference>
<dbReference type="SFLD" id="SFLDF00006">
    <property type="entry name" value="rhamnonate_dehydratase"/>
    <property type="match status" value="1"/>
</dbReference>
<dbReference type="SMART" id="SM00922">
    <property type="entry name" value="MR_MLE"/>
    <property type="match status" value="1"/>
</dbReference>
<dbReference type="SUPFAM" id="SSF51604">
    <property type="entry name" value="Enolase C-terminal domain-like"/>
    <property type="match status" value="1"/>
</dbReference>
<dbReference type="SUPFAM" id="SSF54826">
    <property type="entry name" value="Enolase N-terminal domain-like"/>
    <property type="match status" value="1"/>
</dbReference>
<dbReference type="PROSITE" id="PS00908">
    <property type="entry name" value="MR_MLE_1"/>
    <property type="match status" value="1"/>
</dbReference>
<gene>
    <name evidence="1" type="primary">rhmD</name>
    <name type="ordered locus">ECP_2290</name>
</gene>
<sequence length="405" mass="44703">MENIMTLPKIKQVRAWFTGGATAEKGAGGGDYHDQGANHWIDDHIATPMSKYRDYEQSRQSFGINVLGTLIVEVEAENGQTGFAVSTAGEMGCFIVEKHLNRFIEGKCVSDIKLIHDQMLNATLYYSGSGGLVMNTISCVDLALWDLFGKVVGLPVYKLLGGAVRDEIQFYATGARPDLAKEMGFIGGKMPTHWGPHDGDAGIRKDAAMVADMREKCGEDFWLMLDCWMSQDVNYAIKLAHACAPYNLKWIEECLPPQQYEGYRELKHNAPAGMMVTSGEHHGTLQSFRTLSENGIDIMQPDVGWCGGLTTLVEIAAIAKSRGQLVVPHGSSVYSHHAVITFTNTPFSEFLMTSPDCSTMRPQFDPILLNEPVPVNGRIHKSVLDKPGFGVELNRDCNLKRPYSH</sequence>
<feature type="chain" id="PRO_0000351698" description="L-rhamnonate dehydratase">
    <location>
        <begin position="1"/>
        <end position="405"/>
    </location>
</feature>
<feature type="active site" description="Proton acceptor" evidence="1">
    <location>
        <position position="329"/>
    </location>
</feature>
<feature type="binding site" evidence="1">
    <location>
        <position position="33"/>
    </location>
    <ligand>
        <name>substrate</name>
    </ligand>
</feature>
<feature type="binding site" evidence="1">
    <location>
        <position position="59"/>
    </location>
    <ligand>
        <name>substrate</name>
    </ligand>
</feature>
<feature type="binding site" evidence="1">
    <location>
        <position position="226"/>
    </location>
    <ligand>
        <name>Mg(2+)</name>
        <dbReference type="ChEBI" id="CHEBI:18420"/>
    </ligand>
</feature>
<feature type="binding site" evidence="1">
    <location>
        <position position="252"/>
    </location>
    <ligand>
        <name>Mg(2+)</name>
        <dbReference type="ChEBI" id="CHEBI:18420"/>
    </ligand>
</feature>
<feature type="binding site" evidence="1">
    <location>
        <position position="280"/>
    </location>
    <ligand>
        <name>Mg(2+)</name>
        <dbReference type="ChEBI" id="CHEBI:18420"/>
    </ligand>
</feature>
<feature type="binding site" evidence="1">
    <location>
        <position position="349"/>
    </location>
    <ligand>
        <name>substrate</name>
    </ligand>
</feature>
<feature type="site" description="Increases basicity of active site His" evidence="1">
    <location>
        <position position="302"/>
    </location>
</feature>
<feature type="site" description="Transition state stabilizer" evidence="1">
    <location>
        <position position="349"/>
    </location>
</feature>
<organism>
    <name type="scientific">Escherichia coli O6:K15:H31 (strain 536 / UPEC)</name>
    <dbReference type="NCBI Taxonomy" id="362663"/>
    <lineage>
        <taxon>Bacteria</taxon>
        <taxon>Pseudomonadati</taxon>
        <taxon>Pseudomonadota</taxon>
        <taxon>Gammaproteobacteria</taxon>
        <taxon>Enterobacterales</taxon>
        <taxon>Enterobacteriaceae</taxon>
        <taxon>Escherichia</taxon>
    </lineage>
</organism>
<protein>
    <recommendedName>
        <fullName evidence="1">L-rhamnonate dehydratase</fullName>
        <shortName evidence="1">RhamD</shortName>
        <ecNumber evidence="1">4.2.1.90</ecNumber>
    </recommendedName>
</protein>
<accession>Q0TFJ5</accession>
<reference key="1">
    <citation type="journal article" date="2006" name="Mol. Microbiol.">
        <title>Role of pathogenicity island-associated integrases in the genome plasticity of uropathogenic Escherichia coli strain 536.</title>
        <authorList>
            <person name="Hochhut B."/>
            <person name="Wilde C."/>
            <person name="Balling G."/>
            <person name="Middendorf B."/>
            <person name="Dobrindt U."/>
            <person name="Brzuszkiewicz E."/>
            <person name="Gottschalk G."/>
            <person name="Carniel E."/>
            <person name="Hacker J."/>
        </authorList>
    </citation>
    <scope>NUCLEOTIDE SEQUENCE [LARGE SCALE GENOMIC DNA]</scope>
    <source>
        <strain>536 / UPEC</strain>
    </source>
</reference>
<keyword id="KW-0456">Lyase</keyword>
<keyword id="KW-0460">Magnesium</keyword>
<keyword id="KW-0479">Metal-binding</keyword>
<proteinExistence type="inferred from homology"/>